<sequence>MLLIPAIDLKDGHCVRLKQGDMDQSTTFGEDPAAMARKWADAGARRLHLVDLNGAFAGQPKNKAAIKAILAEVGSDIPVQLGGGIRDLDTIERYIDAGLRYVIIGTAAVKNPGFLKDACSAFGGHIIVGLDAKDGKVATDGWSKLTGHEVVDLARKFQDWGVESIIYTDIGRDGMLSGINIEATVKLAQALTIPVIASGGLAGMADIEKLCEVEDEGVEGVICGRAIYSGDLDFAAAQARADELAGA</sequence>
<proteinExistence type="inferred from homology"/>
<protein>
    <recommendedName>
        <fullName evidence="1">1-(5-phosphoribosyl)-5-[(5-phosphoribosylamino)methylideneamino] imidazole-4-carboxamide isomerase</fullName>
        <ecNumber evidence="1">5.3.1.16</ecNumber>
    </recommendedName>
    <alternativeName>
        <fullName evidence="1">Phosphoribosylformimino-5-aminoimidazole carboxamide ribotide isomerase</fullName>
    </alternativeName>
</protein>
<keyword id="KW-0028">Amino-acid biosynthesis</keyword>
<keyword id="KW-0963">Cytoplasm</keyword>
<keyword id="KW-0368">Histidine biosynthesis</keyword>
<keyword id="KW-0413">Isomerase</keyword>
<accession>A1W434</accession>
<feature type="chain" id="PRO_0000290442" description="1-(5-phosphoribosyl)-5-[(5-phosphoribosylamino)methylideneamino] imidazole-4-carboxamide isomerase">
    <location>
        <begin position="1"/>
        <end position="247"/>
    </location>
</feature>
<feature type="active site" description="Proton acceptor" evidence="1">
    <location>
        <position position="8"/>
    </location>
</feature>
<feature type="active site" description="Proton donor" evidence="1">
    <location>
        <position position="131"/>
    </location>
</feature>
<reference key="1">
    <citation type="submission" date="2006-12" db="EMBL/GenBank/DDBJ databases">
        <title>Complete sequence of chromosome 1 of Acidovorax sp. JS42.</title>
        <authorList>
            <person name="Copeland A."/>
            <person name="Lucas S."/>
            <person name="Lapidus A."/>
            <person name="Barry K."/>
            <person name="Detter J.C."/>
            <person name="Glavina del Rio T."/>
            <person name="Dalin E."/>
            <person name="Tice H."/>
            <person name="Pitluck S."/>
            <person name="Chertkov O."/>
            <person name="Brettin T."/>
            <person name="Bruce D."/>
            <person name="Han C."/>
            <person name="Tapia R."/>
            <person name="Gilna P."/>
            <person name="Schmutz J."/>
            <person name="Larimer F."/>
            <person name="Land M."/>
            <person name="Hauser L."/>
            <person name="Kyrpides N."/>
            <person name="Kim E."/>
            <person name="Stahl D."/>
            <person name="Richardson P."/>
        </authorList>
    </citation>
    <scope>NUCLEOTIDE SEQUENCE [LARGE SCALE GENOMIC DNA]</scope>
    <source>
        <strain>JS42</strain>
    </source>
</reference>
<comment type="catalytic activity">
    <reaction evidence="1">
        <text>1-(5-phospho-beta-D-ribosyl)-5-[(5-phospho-beta-D-ribosylamino)methylideneamino]imidazole-4-carboxamide = 5-[(5-phospho-1-deoxy-D-ribulos-1-ylimino)methylamino]-1-(5-phospho-beta-D-ribosyl)imidazole-4-carboxamide</text>
        <dbReference type="Rhea" id="RHEA:15469"/>
        <dbReference type="ChEBI" id="CHEBI:58435"/>
        <dbReference type="ChEBI" id="CHEBI:58525"/>
        <dbReference type="EC" id="5.3.1.16"/>
    </reaction>
</comment>
<comment type="pathway">
    <text evidence="1">Amino-acid biosynthesis; L-histidine biosynthesis; L-histidine from 5-phospho-alpha-D-ribose 1-diphosphate: step 4/9.</text>
</comment>
<comment type="subcellular location">
    <subcellularLocation>
        <location evidence="1">Cytoplasm</location>
    </subcellularLocation>
</comment>
<comment type="similarity">
    <text evidence="1">Belongs to the HisA/HisF family.</text>
</comment>
<comment type="sequence caution" evidence="2">
    <conflict type="erroneous initiation">
        <sequence resource="EMBL-CDS" id="ABM41009"/>
    </conflict>
</comment>
<dbReference type="EC" id="5.3.1.16" evidence="1"/>
<dbReference type="EMBL" id="CP000539">
    <property type="protein sequence ID" value="ABM41009.1"/>
    <property type="status" value="ALT_INIT"/>
    <property type="molecule type" value="Genomic_DNA"/>
</dbReference>
<dbReference type="SMR" id="A1W434"/>
<dbReference type="STRING" id="232721.Ajs_0765"/>
<dbReference type="KEGG" id="ajs:Ajs_0765"/>
<dbReference type="eggNOG" id="COG0106">
    <property type="taxonomic scope" value="Bacteria"/>
</dbReference>
<dbReference type="HOGENOM" id="CLU_048577_1_1_4"/>
<dbReference type="UniPathway" id="UPA00031">
    <property type="reaction ID" value="UER00009"/>
</dbReference>
<dbReference type="Proteomes" id="UP000000645">
    <property type="component" value="Chromosome"/>
</dbReference>
<dbReference type="GO" id="GO:0005737">
    <property type="term" value="C:cytoplasm"/>
    <property type="evidence" value="ECO:0007669"/>
    <property type="project" value="UniProtKB-SubCell"/>
</dbReference>
<dbReference type="GO" id="GO:0003949">
    <property type="term" value="F:1-(5-phosphoribosyl)-5-[(5-phosphoribosylamino)methylideneamino]imidazole-4-carboxamide isomerase activity"/>
    <property type="evidence" value="ECO:0007669"/>
    <property type="project" value="UniProtKB-UniRule"/>
</dbReference>
<dbReference type="GO" id="GO:0000105">
    <property type="term" value="P:L-histidine biosynthetic process"/>
    <property type="evidence" value="ECO:0007669"/>
    <property type="project" value="UniProtKB-UniRule"/>
</dbReference>
<dbReference type="GO" id="GO:0000162">
    <property type="term" value="P:L-tryptophan biosynthetic process"/>
    <property type="evidence" value="ECO:0007669"/>
    <property type="project" value="TreeGrafter"/>
</dbReference>
<dbReference type="CDD" id="cd04732">
    <property type="entry name" value="HisA"/>
    <property type="match status" value="1"/>
</dbReference>
<dbReference type="FunFam" id="3.20.20.70:FF:000009">
    <property type="entry name" value="1-(5-phosphoribosyl)-5-[(5-phosphoribosylamino)methylideneamino] imidazole-4-carboxamide isomerase"/>
    <property type="match status" value="1"/>
</dbReference>
<dbReference type="Gene3D" id="3.20.20.70">
    <property type="entry name" value="Aldolase class I"/>
    <property type="match status" value="1"/>
</dbReference>
<dbReference type="HAMAP" id="MF_01014">
    <property type="entry name" value="HisA"/>
    <property type="match status" value="1"/>
</dbReference>
<dbReference type="InterPro" id="IPR013785">
    <property type="entry name" value="Aldolase_TIM"/>
</dbReference>
<dbReference type="InterPro" id="IPR006062">
    <property type="entry name" value="His_biosynth"/>
</dbReference>
<dbReference type="InterPro" id="IPR006063">
    <property type="entry name" value="HisA_bact_arch"/>
</dbReference>
<dbReference type="InterPro" id="IPR044524">
    <property type="entry name" value="Isoase_HisA-like"/>
</dbReference>
<dbReference type="InterPro" id="IPR023016">
    <property type="entry name" value="Isoase_HisA-like_bact"/>
</dbReference>
<dbReference type="InterPro" id="IPR011060">
    <property type="entry name" value="RibuloseP-bd_barrel"/>
</dbReference>
<dbReference type="NCBIfam" id="TIGR00007">
    <property type="entry name" value="1-(5-phosphoribosyl)-5-[(5-phosphoribosylamino)methylideneamino]imidazole-4-carboxamide isomerase"/>
    <property type="match status" value="1"/>
</dbReference>
<dbReference type="NCBIfam" id="NF010112">
    <property type="entry name" value="PRK13585.1"/>
    <property type="match status" value="1"/>
</dbReference>
<dbReference type="PANTHER" id="PTHR43090">
    <property type="entry name" value="1-(5-PHOSPHORIBOSYL)-5-[(5-PHOSPHORIBOSYLAMINO)METHYLIDENEAMINO] IMIDAZOLE-4-CARBOXAMIDE ISOMERASE"/>
    <property type="match status" value="1"/>
</dbReference>
<dbReference type="PANTHER" id="PTHR43090:SF2">
    <property type="entry name" value="1-(5-PHOSPHORIBOSYL)-5-[(5-PHOSPHORIBOSYLAMINO)METHYLIDENEAMINO] IMIDAZOLE-4-CARBOXAMIDE ISOMERASE"/>
    <property type="match status" value="1"/>
</dbReference>
<dbReference type="Pfam" id="PF00977">
    <property type="entry name" value="His_biosynth"/>
    <property type="match status" value="1"/>
</dbReference>
<dbReference type="SUPFAM" id="SSF51366">
    <property type="entry name" value="Ribulose-phoshate binding barrel"/>
    <property type="match status" value="1"/>
</dbReference>
<evidence type="ECO:0000255" key="1">
    <source>
        <dbReference type="HAMAP-Rule" id="MF_01014"/>
    </source>
</evidence>
<evidence type="ECO:0000305" key="2"/>
<organism>
    <name type="scientific">Acidovorax sp. (strain JS42)</name>
    <dbReference type="NCBI Taxonomy" id="232721"/>
    <lineage>
        <taxon>Bacteria</taxon>
        <taxon>Pseudomonadati</taxon>
        <taxon>Pseudomonadota</taxon>
        <taxon>Betaproteobacteria</taxon>
        <taxon>Burkholderiales</taxon>
        <taxon>Comamonadaceae</taxon>
        <taxon>Acidovorax</taxon>
    </lineage>
</organism>
<gene>
    <name evidence="1" type="primary">hisA</name>
    <name type="ordered locus">Ajs_0765</name>
</gene>
<name>HIS4_ACISJ</name>